<organism>
    <name type="scientific">Myxococcus fulvus</name>
    <dbReference type="NCBI Taxonomy" id="33"/>
    <lineage>
        <taxon>Bacteria</taxon>
        <taxon>Pseudomonadati</taxon>
        <taxon>Myxococcota</taxon>
        <taxon>Myxococcia</taxon>
        <taxon>Myxococcales</taxon>
        <taxon>Cystobacterineae</taxon>
        <taxon>Myxococcaceae</taxon>
        <taxon>Myxococcus</taxon>
    </lineage>
</organism>
<accession>P01547</accession>
<dbReference type="PIR" id="A01810">
    <property type="entry name" value="FFYZ"/>
</dbReference>
<dbReference type="GO" id="GO:0042742">
    <property type="term" value="P:defense response to bacterium"/>
    <property type="evidence" value="ECO:0007669"/>
    <property type="project" value="UniProtKB-KW"/>
</dbReference>
<dbReference type="GO" id="GO:0031640">
    <property type="term" value="P:killing of cells of another organism"/>
    <property type="evidence" value="ECO:0007669"/>
    <property type="project" value="UniProtKB-KW"/>
</dbReference>
<protein>
    <recommendedName>
        <fullName>Bacteriocin fulvocin-C</fullName>
    </recommendedName>
</protein>
<feature type="peptide" id="PRO_0000110579" description="Bacteriocin fulvocin-C">
    <location>
        <begin position="1"/>
        <end position="45"/>
    </location>
</feature>
<proteinExistence type="evidence at protein level"/>
<reference key="1">
    <citation type="journal article" date="1981" name="Biochim. Biophys. Acta">
        <title>The primary structure of fulvocin C from Myxococcus fulvus.</title>
        <authorList>
            <person name="Tsai H."/>
            <person name="Hirsch H.-J."/>
        </authorList>
    </citation>
    <scope>PROTEIN SEQUENCE</scope>
</reference>
<keyword id="KW-0044">Antibiotic</keyword>
<keyword id="KW-0929">Antimicrobial</keyword>
<keyword id="KW-0078">Bacteriocin</keyword>
<keyword id="KW-0903">Direct protein sequencing</keyword>
<sequence>ANCSCSTASDYCPILTFCTTGTACSYTPTGCGTGWVYCACNGNFY</sequence>
<name>FULC_MYXFU</name>
<comment type="function">
    <text>Bacteriocin.</text>
</comment>